<reference key="1">
    <citation type="submission" date="2009-07" db="EMBL/GenBank/DDBJ databases">
        <title>Complete sequence of Geobacter sp. M21.</title>
        <authorList>
            <consortium name="US DOE Joint Genome Institute"/>
            <person name="Lucas S."/>
            <person name="Copeland A."/>
            <person name="Lapidus A."/>
            <person name="Glavina del Rio T."/>
            <person name="Dalin E."/>
            <person name="Tice H."/>
            <person name="Bruce D."/>
            <person name="Goodwin L."/>
            <person name="Pitluck S."/>
            <person name="Saunders E."/>
            <person name="Brettin T."/>
            <person name="Detter J.C."/>
            <person name="Han C."/>
            <person name="Larimer F."/>
            <person name="Land M."/>
            <person name="Hauser L."/>
            <person name="Kyrpides N."/>
            <person name="Ovchinnikova G."/>
            <person name="Lovley D."/>
        </authorList>
    </citation>
    <scope>NUCLEOTIDE SEQUENCE [LARGE SCALE GENOMIC DNA]</scope>
    <source>
        <strain>M21</strain>
    </source>
</reference>
<gene>
    <name evidence="1" type="primary">nadD</name>
    <name type="ordered locus">GM21_3861</name>
</gene>
<protein>
    <recommendedName>
        <fullName evidence="1">Probable nicotinate-nucleotide adenylyltransferase</fullName>
        <ecNumber evidence="1">2.7.7.18</ecNumber>
    </recommendedName>
    <alternativeName>
        <fullName evidence="1">Deamido-NAD(+) diphosphorylase</fullName>
    </alternativeName>
    <alternativeName>
        <fullName evidence="1">Deamido-NAD(+) pyrophosphorylase</fullName>
    </alternativeName>
    <alternativeName>
        <fullName evidence="1">Nicotinate mononucleotide adenylyltransferase</fullName>
        <shortName evidence="1">NaMN adenylyltransferase</shortName>
    </alternativeName>
</protein>
<accession>C6E7L8</accession>
<dbReference type="EC" id="2.7.7.18" evidence="1"/>
<dbReference type="EMBL" id="CP001661">
    <property type="protein sequence ID" value="ACT19878.1"/>
    <property type="molecule type" value="Genomic_DNA"/>
</dbReference>
<dbReference type="SMR" id="C6E7L8"/>
<dbReference type="STRING" id="443144.GM21_3861"/>
<dbReference type="KEGG" id="gem:GM21_3861"/>
<dbReference type="eggNOG" id="COG1057">
    <property type="taxonomic scope" value="Bacteria"/>
</dbReference>
<dbReference type="HOGENOM" id="CLU_069765_3_1_7"/>
<dbReference type="OrthoDB" id="5295945at2"/>
<dbReference type="UniPathway" id="UPA00253">
    <property type="reaction ID" value="UER00332"/>
</dbReference>
<dbReference type="GO" id="GO:0005524">
    <property type="term" value="F:ATP binding"/>
    <property type="evidence" value="ECO:0007669"/>
    <property type="project" value="UniProtKB-KW"/>
</dbReference>
<dbReference type="GO" id="GO:0004515">
    <property type="term" value="F:nicotinate-nucleotide adenylyltransferase activity"/>
    <property type="evidence" value="ECO:0007669"/>
    <property type="project" value="UniProtKB-UniRule"/>
</dbReference>
<dbReference type="GO" id="GO:0009435">
    <property type="term" value="P:NAD biosynthetic process"/>
    <property type="evidence" value="ECO:0007669"/>
    <property type="project" value="UniProtKB-UniRule"/>
</dbReference>
<dbReference type="CDD" id="cd02165">
    <property type="entry name" value="NMNAT"/>
    <property type="match status" value="1"/>
</dbReference>
<dbReference type="Gene3D" id="3.40.50.620">
    <property type="entry name" value="HUPs"/>
    <property type="match status" value="1"/>
</dbReference>
<dbReference type="HAMAP" id="MF_00244">
    <property type="entry name" value="NaMN_adenylyltr"/>
    <property type="match status" value="1"/>
</dbReference>
<dbReference type="InterPro" id="IPR004821">
    <property type="entry name" value="Cyt_trans-like"/>
</dbReference>
<dbReference type="InterPro" id="IPR005248">
    <property type="entry name" value="NadD/NMNAT"/>
</dbReference>
<dbReference type="InterPro" id="IPR014729">
    <property type="entry name" value="Rossmann-like_a/b/a_fold"/>
</dbReference>
<dbReference type="NCBIfam" id="TIGR00125">
    <property type="entry name" value="cyt_tran_rel"/>
    <property type="match status" value="1"/>
</dbReference>
<dbReference type="NCBIfam" id="TIGR00482">
    <property type="entry name" value="nicotinate (nicotinamide) nucleotide adenylyltransferase"/>
    <property type="match status" value="1"/>
</dbReference>
<dbReference type="NCBIfam" id="NF000840">
    <property type="entry name" value="PRK00071.1-3"/>
    <property type="match status" value="1"/>
</dbReference>
<dbReference type="PANTHER" id="PTHR39321">
    <property type="entry name" value="NICOTINATE-NUCLEOTIDE ADENYLYLTRANSFERASE-RELATED"/>
    <property type="match status" value="1"/>
</dbReference>
<dbReference type="PANTHER" id="PTHR39321:SF3">
    <property type="entry name" value="PHOSPHOPANTETHEINE ADENYLYLTRANSFERASE"/>
    <property type="match status" value="1"/>
</dbReference>
<dbReference type="Pfam" id="PF01467">
    <property type="entry name" value="CTP_transf_like"/>
    <property type="match status" value="1"/>
</dbReference>
<dbReference type="SUPFAM" id="SSF52374">
    <property type="entry name" value="Nucleotidylyl transferase"/>
    <property type="match status" value="1"/>
</dbReference>
<organism>
    <name type="scientific">Geobacter sp. (strain M21)</name>
    <dbReference type="NCBI Taxonomy" id="443144"/>
    <lineage>
        <taxon>Bacteria</taxon>
        <taxon>Pseudomonadati</taxon>
        <taxon>Thermodesulfobacteriota</taxon>
        <taxon>Desulfuromonadia</taxon>
        <taxon>Geobacterales</taxon>
        <taxon>Geobacteraceae</taxon>
        <taxon>Geobacter</taxon>
    </lineage>
</organism>
<comment type="function">
    <text evidence="1">Catalyzes the reversible adenylation of nicotinate mononucleotide (NaMN) to nicotinic acid adenine dinucleotide (NaAD).</text>
</comment>
<comment type="catalytic activity">
    <reaction evidence="1">
        <text>nicotinate beta-D-ribonucleotide + ATP + H(+) = deamido-NAD(+) + diphosphate</text>
        <dbReference type="Rhea" id="RHEA:22860"/>
        <dbReference type="ChEBI" id="CHEBI:15378"/>
        <dbReference type="ChEBI" id="CHEBI:30616"/>
        <dbReference type="ChEBI" id="CHEBI:33019"/>
        <dbReference type="ChEBI" id="CHEBI:57502"/>
        <dbReference type="ChEBI" id="CHEBI:58437"/>
        <dbReference type="EC" id="2.7.7.18"/>
    </reaction>
</comment>
<comment type="pathway">
    <text evidence="1">Cofactor biosynthesis; NAD(+) biosynthesis; deamido-NAD(+) from nicotinate D-ribonucleotide: step 1/1.</text>
</comment>
<comment type="similarity">
    <text evidence="1">Belongs to the NadD family.</text>
</comment>
<keyword id="KW-0067">ATP-binding</keyword>
<keyword id="KW-0520">NAD</keyword>
<keyword id="KW-0547">Nucleotide-binding</keyword>
<keyword id="KW-0548">Nucleotidyltransferase</keyword>
<keyword id="KW-0662">Pyridine nucleotide biosynthesis</keyword>
<keyword id="KW-0808">Transferase</keyword>
<proteinExistence type="inferred from homology"/>
<feature type="chain" id="PRO_1000204485" description="Probable nicotinate-nucleotide adenylyltransferase">
    <location>
        <begin position="1"/>
        <end position="216"/>
    </location>
</feature>
<sequence>MRLGILGGTFNPIHNAHLRIAEEARDLYELDRVVFIPAATPPHKPLVGELSFASRLEMVRLAVADNSGFMVSDMEGVRGGRSYSIDTLRELKAEHPDDELFFIVGADSFNDISTWKEYAAIFGLCNVISVQRPGSTITSLAEVLPVAIAGEFCYDPAANRLNHCSGHAVYALDGVLLDISSSHIRLLVQGGRSIRYLIPDAVEQYIKEQRLYVDAR</sequence>
<evidence type="ECO:0000255" key="1">
    <source>
        <dbReference type="HAMAP-Rule" id="MF_00244"/>
    </source>
</evidence>
<name>NADD_GEOSM</name>